<name>ESTJ_MANSE</name>
<protein>
    <recommendedName>
        <fullName>Juvenile hormone esterase</fullName>
        <shortName>JH esterase</shortName>
        <ecNumber evidence="1">3.1.1.59</ecNumber>
    </recommendedName>
</protein>
<sequence length="15" mass="1659">RIPSTEEVVVRTESG</sequence>
<keyword id="KW-0903">Direct protein sequencing</keyword>
<keyword id="KW-0378">Hydrolase</keyword>
<keyword id="KW-0719">Serine esterase</keyword>
<accession>P19985</accession>
<organism>
    <name type="scientific">Manduca sexta</name>
    <name type="common">Tobacco hawkmoth</name>
    <name type="synonym">Tobacco hornworm</name>
    <dbReference type="NCBI Taxonomy" id="7130"/>
    <lineage>
        <taxon>Eukaryota</taxon>
        <taxon>Metazoa</taxon>
        <taxon>Ecdysozoa</taxon>
        <taxon>Arthropoda</taxon>
        <taxon>Hexapoda</taxon>
        <taxon>Insecta</taxon>
        <taxon>Pterygota</taxon>
        <taxon>Neoptera</taxon>
        <taxon>Endopterygota</taxon>
        <taxon>Lepidoptera</taxon>
        <taxon>Glossata</taxon>
        <taxon>Ditrysia</taxon>
        <taxon>Bombycoidea</taxon>
        <taxon>Sphingidae</taxon>
        <taxon>Sphinginae</taxon>
        <taxon>Sphingini</taxon>
        <taxon>Manduca</taxon>
    </lineage>
</organism>
<reference key="1">
    <citation type="journal article" date="1990" name="J. Biol. Chem.">
        <title>Characterization of affinity-purified juvenile hormone esterase from the plasma of the tobacco hornworm, Manduca sexta.</title>
        <authorList>
            <person name="Venkatesh K."/>
            <person name="Abdel-Aal Y.A.I."/>
            <person name="Armstrong F.B."/>
            <person name="Roe R.M."/>
        </authorList>
    </citation>
    <scope>PROTEIN SEQUENCE</scope>
    <source>
        <tissue>Larval plasma</tissue>
    </source>
</reference>
<reference key="2">
    <citation type="journal article" date="1979" name="Insect Biochem.">
        <title>Metabolism of juvenile hormone by the epidermis of the tobacco hornworm (Manduca sexta).</title>
        <authorList>
            <person name="Mitsui T."/>
            <person name="Riddiford L.M."/>
            <person name="Bellamy G."/>
        </authorList>
    </citation>
    <scope>FUNCTION</scope>
    <scope>CATALYTIC ACTIVITY</scope>
</reference>
<proteinExistence type="evidence at protein level"/>
<evidence type="ECO:0000269" key="1">
    <source ref="2"/>
</evidence>
<evidence type="ECO:0000305" key="2"/>
<dbReference type="EC" id="3.1.1.59" evidence="1"/>
<dbReference type="PIR" id="A36527">
    <property type="entry name" value="A36527"/>
</dbReference>
<dbReference type="ESTHER" id="manse-jhest">
    <property type="family name" value="Juvenile_hormone_esterase"/>
</dbReference>
<dbReference type="BRENDA" id="3.1.1.59">
    <property type="organism ID" value="3173"/>
</dbReference>
<dbReference type="GO" id="GO:0004453">
    <property type="term" value="F:juvenile-hormone esterase activity"/>
    <property type="evidence" value="ECO:0007669"/>
    <property type="project" value="UniProtKB-EC"/>
</dbReference>
<comment type="function">
    <text evidence="1">JH esterase plays a crucial role in the decrease of JH activity in lepidopteran insects, by hydrolyzing the methyl ester of JH. It is also involved in the transport of JH.</text>
</comment>
<comment type="catalytic activity">
    <reaction evidence="1">
        <text>juvenile hormone I + H2O = juvenile hormone I carboxylate + methanol + H(+)</text>
        <dbReference type="Rhea" id="RHEA:46916"/>
        <dbReference type="ChEBI" id="CHEBI:15377"/>
        <dbReference type="ChEBI" id="CHEBI:15378"/>
        <dbReference type="ChEBI" id="CHEBI:17790"/>
        <dbReference type="ChEBI" id="CHEBI:83641"/>
        <dbReference type="ChEBI" id="CHEBI:87109"/>
        <dbReference type="EC" id="3.1.1.59"/>
    </reaction>
</comment>
<comment type="catalytic activity">
    <reaction evidence="1">
        <text>juvenile hormone III + H2O = juvenile hormone III carboxylate + methanol + H(+)</text>
        <dbReference type="Rhea" id="RHEA:46912"/>
        <dbReference type="ChEBI" id="CHEBI:15377"/>
        <dbReference type="ChEBI" id="CHEBI:15378"/>
        <dbReference type="ChEBI" id="CHEBI:17790"/>
        <dbReference type="ChEBI" id="CHEBI:27493"/>
        <dbReference type="ChEBI" id="CHEBI:83274"/>
        <dbReference type="EC" id="3.1.1.59"/>
    </reaction>
</comment>
<comment type="similarity">
    <text evidence="2">Belongs to the type-B carboxylesterase/lipase family.</text>
</comment>
<feature type="chain" id="PRO_0000070291" description="Juvenile hormone esterase">
    <location>
        <begin position="1"/>
        <end position="15" status="greater than"/>
    </location>
</feature>
<feature type="non-terminal residue">
    <location>
        <position position="15"/>
    </location>
</feature>